<feature type="chain" id="PRO_1000016446" description="Histidine--tRNA ligase">
    <location>
        <begin position="1"/>
        <end position="424"/>
    </location>
</feature>
<name>SYH_SHEFN</name>
<accession>Q085U5</accession>
<dbReference type="EC" id="6.1.1.21" evidence="1"/>
<dbReference type="EMBL" id="CP000447">
    <property type="protein sequence ID" value="ABI70970.1"/>
    <property type="molecule type" value="Genomic_DNA"/>
</dbReference>
<dbReference type="RefSeq" id="WP_011636591.1">
    <property type="nucleotide sequence ID" value="NC_008345.1"/>
</dbReference>
<dbReference type="SMR" id="Q085U5"/>
<dbReference type="STRING" id="318167.Sfri_1117"/>
<dbReference type="KEGG" id="sfr:Sfri_1117"/>
<dbReference type="eggNOG" id="COG0124">
    <property type="taxonomic scope" value="Bacteria"/>
</dbReference>
<dbReference type="HOGENOM" id="CLU_025113_1_1_6"/>
<dbReference type="OrthoDB" id="9800814at2"/>
<dbReference type="Proteomes" id="UP000000684">
    <property type="component" value="Chromosome"/>
</dbReference>
<dbReference type="GO" id="GO:0005737">
    <property type="term" value="C:cytoplasm"/>
    <property type="evidence" value="ECO:0007669"/>
    <property type="project" value="UniProtKB-SubCell"/>
</dbReference>
<dbReference type="GO" id="GO:0005524">
    <property type="term" value="F:ATP binding"/>
    <property type="evidence" value="ECO:0007669"/>
    <property type="project" value="UniProtKB-UniRule"/>
</dbReference>
<dbReference type="GO" id="GO:0004821">
    <property type="term" value="F:histidine-tRNA ligase activity"/>
    <property type="evidence" value="ECO:0007669"/>
    <property type="project" value="UniProtKB-UniRule"/>
</dbReference>
<dbReference type="GO" id="GO:0006427">
    <property type="term" value="P:histidyl-tRNA aminoacylation"/>
    <property type="evidence" value="ECO:0007669"/>
    <property type="project" value="UniProtKB-UniRule"/>
</dbReference>
<dbReference type="CDD" id="cd00773">
    <property type="entry name" value="HisRS-like_core"/>
    <property type="match status" value="1"/>
</dbReference>
<dbReference type="CDD" id="cd00859">
    <property type="entry name" value="HisRS_anticodon"/>
    <property type="match status" value="1"/>
</dbReference>
<dbReference type="FunFam" id="3.30.930.10:FF:000005">
    <property type="entry name" value="Histidine--tRNA ligase"/>
    <property type="match status" value="1"/>
</dbReference>
<dbReference type="Gene3D" id="3.40.50.800">
    <property type="entry name" value="Anticodon-binding domain"/>
    <property type="match status" value="1"/>
</dbReference>
<dbReference type="Gene3D" id="3.30.930.10">
    <property type="entry name" value="Bira Bifunctional Protein, Domain 2"/>
    <property type="match status" value="1"/>
</dbReference>
<dbReference type="HAMAP" id="MF_00127">
    <property type="entry name" value="His_tRNA_synth"/>
    <property type="match status" value="1"/>
</dbReference>
<dbReference type="InterPro" id="IPR006195">
    <property type="entry name" value="aa-tRNA-synth_II"/>
</dbReference>
<dbReference type="InterPro" id="IPR045864">
    <property type="entry name" value="aa-tRNA-synth_II/BPL/LPL"/>
</dbReference>
<dbReference type="InterPro" id="IPR004154">
    <property type="entry name" value="Anticodon-bd"/>
</dbReference>
<dbReference type="InterPro" id="IPR036621">
    <property type="entry name" value="Anticodon-bd_dom_sf"/>
</dbReference>
<dbReference type="InterPro" id="IPR015807">
    <property type="entry name" value="His-tRNA-ligase"/>
</dbReference>
<dbReference type="InterPro" id="IPR041715">
    <property type="entry name" value="HisRS-like_core"/>
</dbReference>
<dbReference type="InterPro" id="IPR004516">
    <property type="entry name" value="HisRS/HisZ"/>
</dbReference>
<dbReference type="InterPro" id="IPR033656">
    <property type="entry name" value="HisRS_anticodon"/>
</dbReference>
<dbReference type="NCBIfam" id="TIGR00442">
    <property type="entry name" value="hisS"/>
    <property type="match status" value="1"/>
</dbReference>
<dbReference type="PANTHER" id="PTHR43707:SF1">
    <property type="entry name" value="HISTIDINE--TRNA LIGASE, MITOCHONDRIAL-RELATED"/>
    <property type="match status" value="1"/>
</dbReference>
<dbReference type="PANTHER" id="PTHR43707">
    <property type="entry name" value="HISTIDYL-TRNA SYNTHETASE"/>
    <property type="match status" value="1"/>
</dbReference>
<dbReference type="Pfam" id="PF03129">
    <property type="entry name" value="HGTP_anticodon"/>
    <property type="match status" value="1"/>
</dbReference>
<dbReference type="Pfam" id="PF13393">
    <property type="entry name" value="tRNA-synt_His"/>
    <property type="match status" value="1"/>
</dbReference>
<dbReference type="PIRSF" id="PIRSF001549">
    <property type="entry name" value="His-tRNA_synth"/>
    <property type="match status" value="1"/>
</dbReference>
<dbReference type="SUPFAM" id="SSF52954">
    <property type="entry name" value="Class II aaRS ABD-related"/>
    <property type="match status" value="1"/>
</dbReference>
<dbReference type="SUPFAM" id="SSF55681">
    <property type="entry name" value="Class II aaRS and biotin synthetases"/>
    <property type="match status" value="1"/>
</dbReference>
<dbReference type="PROSITE" id="PS50862">
    <property type="entry name" value="AA_TRNA_LIGASE_II"/>
    <property type="match status" value="1"/>
</dbReference>
<keyword id="KW-0030">Aminoacyl-tRNA synthetase</keyword>
<keyword id="KW-0067">ATP-binding</keyword>
<keyword id="KW-0963">Cytoplasm</keyword>
<keyword id="KW-0436">Ligase</keyword>
<keyword id="KW-0547">Nucleotide-binding</keyword>
<keyword id="KW-0648">Protein biosynthesis</keyword>
<keyword id="KW-1185">Reference proteome</keyword>
<organism>
    <name type="scientific">Shewanella frigidimarina (strain NCIMB 400)</name>
    <dbReference type="NCBI Taxonomy" id="318167"/>
    <lineage>
        <taxon>Bacteria</taxon>
        <taxon>Pseudomonadati</taxon>
        <taxon>Pseudomonadota</taxon>
        <taxon>Gammaproteobacteria</taxon>
        <taxon>Alteromonadales</taxon>
        <taxon>Shewanellaceae</taxon>
        <taxon>Shewanella</taxon>
    </lineage>
</organism>
<sequence length="424" mass="47355">MAKQIQAIRGMNDILPTQSPLWQKVEAVLRSSVSAFGYSEIRTPIVESTDLFKRSIGEVTDIVEKEMYTFEDRNSDSLTLRPEGTASTVRAGNEHGLLYNQEQRLWYMGPMFRHERPQKGRYRQFHQFGVEVYGIGSADIDAEVLMLSARLWDLLGIKEHVALELNTLGDPAERAAYRDALIAFLEQHKDKLDEDSQRRMYSNPLRVLDSKDPQVQAILGDAPALMDYLGEDSKTHFSTLCELLDAVGIQYTINPRLVRGLDYYNRTVFEWVTTSLGSQGTVLAGGRYDGLVGQLGGKDTPAVGFAMGLERIVLLLETLELTSDIAPEVDVYVTAMGENCVVEAIKVAQELRQQLPTLKVMSHCGGGNFKKQMKRADKSGAQFALIIGENEIANNQVAIKPLRTNNEQQLVTRSELVAKIAELI</sequence>
<reference key="1">
    <citation type="submission" date="2006-08" db="EMBL/GenBank/DDBJ databases">
        <title>Complete sequence of Shewanella frigidimarina NCIMB 400.</title>
        <authorList>
            <consortium name="US DOE Joint Genome Institute"/>
            <person name="Copeland A."/>
            <person name="Lucas S."/>
            <person name="Lapidus A."/>
            <person name="Barry K."/>
            <person name="Detter J.C."/>
            <person name="Glavina del Rio T."/>
            <person name="Hammon N."/>
            <person name="Israni S."/>
            <person name="Dalin E."/>
            <person name="Tice H."/>
            <person name="Pitluck S."/>
            <person name="Fredrickson J.K."/>
            <person name="Kolker E."/>
            <person name="McCuel L.A."/>
            <person name="DiChristina T."/>
            <person name="Nealson K.H."/>
            <person name="Newman D."/>
            <person name="Tiedje J.M."/>
            <person name="Zhou J."/>
            <person name="Romine M.F."/>
            <person name="Culley D.E."/>
            <person name="Serres M."/>
            <person name="Chertkov O."/>
            <person name="Brettin T."/>
            <person name="Bruce D."/>
            <person name="Han C."/>
            <person name="Tapia R."/>
            <person name="Gilna P."/>
            <person name="Schmutz J."/>
            <person name="Larimer F."/>
            <person name="Land M."/>
            <person name="Hauser L."/>
            <person name="Kyrpides N."/>
            <person name="Mikhailova N."/>
            <person name="Richardson P."/>
        </authorList>
    </citation>
    <scope>NUCLEOTIDE SEQUENCE [LARGE SCALE GENOMIC DNA]</scope>
    <source>
        <strain>NCIMB 400</strain>
    </source>
</reference>
<proteinExistence type="inferred from homology"/>
<gene>
    <name evidence="1" type="primary">hisS</name>
    <name type="ordered locus">Sfri_1117</name>
</gene>
<comment type="catalytic activity">
    <reaction evidence="1">
        <text>tRNA(His) + L-histidine + ATP = L-histidyl-tRNA(His) + AMP + diphosphate + H(+)</text>
        <dbReference type="Rhea" id="RHEA:17313"/>
        <dbReference type="Rhea" id="RHEA-COMP:9665"/>
        <dbReference type="Rhea" id="RHEA-COMP:9689"/>
        <dbReference type="ChEBI" id="CHEBI:15378"/>
        <dbReference type="ChEBI" id="CHEBI:30616"/>
        <dbReference type="ChEBI" id="CHEBI:33019"/>
        <dbReference type="ChEBI" id="CHEBI:57595"/>
        <dbReference type="ChEBI" id="CHEBI:78442"/>
        <dbReference type="ChEBI" id="CHEBI:78527"/>
        <dbReference type="ChEBI" id="CHEBI:456215"/>
        <dbReference type="EC" id="6.1.1.21"/>
    </reaction>
</comment>
<comment type="subunit">
    <text evidence="1">Homodimer.</text>
</comment>
<comment type="subcellular location">
    <subcellularLocation>
        <location evidence="1">Cytoplasm</location>
    </subcellularLocation>
</comment>
<comment type="similarity">
    <text evidence="1">Belongs to the class-II aminoacyl-tRNA synthetase family.</text>
</comment>
<protein>
    <recommendedName>
        <fullName evidence="1">Histidine--tRNA ligase</fullName>
        <ecNumber evidence="1">6.1.1.21</ecNumber>
    </recommendedName>
    <alternativeName>
        <fullName evidence="1">Histidyl-tRNA synthetase</fullName>
        <shortName evidence="1">HisRS</shortName>
    </alternativeName>
</protein>
<evidence type="ECO:0000255" key="1">
    <source>
        <dbReference type="HAMAP-Rule" id="MF_00127"/>
    </source>
</evidence>